<protein>
    <recommendedName>
        <fullName evidence="1">Adenylate kinase isoenzyme 6</fullName>
        <shortName evidence="1">AK6</shortName>
        <ecNumber evidence="1">2.7.4.3</ecNumber>
    </recommendedName>
    <alternativeName>
        <fullName evidence="1">Coilin-interacting nuclear ATPase protein</fullName>
    </alternativeName>
    <alternativeName>
        <fullName evidence="1">Dual activity adenylate kinase/ATPase</fullName>
        <shortName evidence="1">AK/ATPase</shortName>
    </alternativeName>
</protein>
<evidence type="ECO:0000255" key="1">
    <source>
        <dbReference type="HAMAP-Rule" id="MF_03173"/>
    </source>
</evidence>
<evidence type="ECO:0000305" key="2"/>
<gene>
    <name evidence="1" type="primary">AK6</name>
    <name evidence="1" type="synonym">CINAP</name>
</gene>
<name>KAD6_BOVIN</name>
<organism>
    <name type="scientific">Bos taurus</name>
    <name type="common">Bovine</name>
    <dbReference type="NCBI Taxonomy" id="9913"/>
    <lineage>
        <taxon>Eukaryota</taxon>
        <taxon>Metazoa</taxon>
        <taxon>Chordata</taxon>
        <taxon>Craniata</taxon>
        <taxon>Vertebrata</taxon>
        <taxon>Euteleostomi</taxon>
        <taxon>Mammalia</taxon>
        <taxon>Eutheria</taxon>
        <taxon>Laurasiatheria</taxon>
        <taxon>Artiodactyla</taxon>
        <taxon>Ruminantia</taxon>
        <taxon>Pecora</taxon>
        <taxon>Bovidae</taxon>
        <taxon>Bovinae</taxon>
        <taxon>Bos</taxon>
    </lineage>
</organism>
<keyword id="KW-0067">ATP-binding</keyword>
<keyword id="KW-0963">Cytoplasm</keyword>
<keyword id="KW-0418">Kinase</keyword>
<keyword id="KW-0547">Nucleotide-binding</keyword>
<keyword id="KW-0539">Nucleus</keyword>
<keyword id="KW-1185">Reference proteome</keyword>
<keyword id="KW-0690">Ribosome biogenesis</keyword>
<keyword id="KW-0698">rRNA processing</keyword>
<keyword id="KW-0808">Transferase</keyword>
<sequence>MLLPNILLTGTPGVGKTTLGKELASRSGLKYINVGDLAREGQLYDGYDEEYDCPILDEDRVVDELENQMSEGGVIVDYHGCDFFPERWFHIVFVLKTDNSILYKRLENRGYNEKKLKDNIQCEIFQVLHEEALASYKEEIVHQLPSNKPEDLEDNINQILKWIEHWVKDHSS</sequence>
<dbReference type="EC" id="2.7.4.3" evidence="1"/>
<dbReference type="EMBL" id="BC142021">
    <property type="protein sequence ID" value="AAI42022.1"/>
    <property type="molecule type" value="mRNA"/>
</dbReference>
<dbReference type="RefSeq" id="NP_001099078.1">
    <property type="nucleotide sequence ID" value="NM_001105608.2"/>
</dbReference>
<dbReference type="SMR" id="A5PJA1"/>
<dbReference type="FunCoup" id="A5PJA1">
    <property type="interactions" value="2251"/>
</dbReference>
<dbReference type="STRING" id="9913.ENSBTAP00000073032"/>
<dbReference type="PaxDb" id="9913-ENSBTAP00000040135"/>
<dbReference type="GeneID" id="102216273"/>
<dbReference type="KEGG" id="bta:102216273"/>
<dbReference type="CTD" id="102157402"/>
<dbReference type="VEuPathDB" id="HostDB:ENSBTAG00000046192"/>
<dbReference type="eggNOG" id="KOG3347">
    <property type="taxonomic scope" value="Eukaryota"/>
</dbReference>
<dbReference type="HOGENOM" id="CLU_079096_3_3_1"/>
<dbReference type="InParanoid" id="A5PJA1"/>
<dbReference type="OMA" id="QCEIFGT"/>
<dbReference type="OrthoDB" id="10251185at2759"/>
<dbReference type="TreeFam" id="TF313388"/>
<dbReference type="Reactome" id="R-BTA-499943">
    <property type="pathway name" value="Interconversion of nucleotide di- and triphosphates"/>
</dbReference>
<dbReference type="Proteomes" id="UP000009136">
    <property type="component" value="Chromosome 20"/>
</dbReference>
<dbReference type="Bgee" id="ENSBTAG00000046192">
    <property type="expression patterns" value="Expressed in semen and 105 other cell types or tissues"/>
</dbReference>
<dbReference type="GO" id="GO:0015030">
    <property type="term" value="C:Cajal body"/>
    <property type="evidence" value="ECO:0000250"/>
    <property type="project" value="UniProtKB"/>
</dbReference>
<dbReference type="GO" id="GO:0005737">
    <property type="term" value="C:cytoplasm"/>
    <property type="evidence" value="ECO:0000318"/>
    <property type="project" value="GO_Central"/>
</dbReference>
<dbReference type="GO" id="GO:0005654">
    <property type="term" value="C:nucleoplasm"/>
    <property type="evidence" value="ECO:0000250"/>
    <property type="project" value="UniProtKB"/>
</dbReference>
<dbReference type="GO" id="GO:0005634">
    <property type="term" value="C:nucleus"/>
    <property type="evidence" value="ECO:0000318"/>
    <property type="project" value="GO_Central"/>
</dbReference>
<dbReference type="GO" id="GO:0004017">
    <property type="term" value="F:adenylate kinase activity"/>
    <property type="evidence" value="ECO:0000250"/>
    <property type="project" value="UniProtKB"/>
</dbReference>
<dbReference type="GO" id="GO:0005524">
    <property type="term" value="F:ATP binding"/>
    <property type="evidence" value="ECO:0000318"/>
    <property type="project" value="GO_Central"/>
</dbReference>
<dbReference type="GO" id="GO:0016887">
    <property type="term" value="F:ATP hydrolysis activity"/>
    <property type="evidence" value="ECO:0007669"/>
    <property type="project" value="UniProtKB-UniRule"/>
</dbReference>
<dbReference type="GO" id="GO:0042274">
    <property type="term" value="P:ribosomal small subunit biogenesis"/>
    <property type="evidence" value="ECO:0007669"/>
    <property type="project" value="UniProtKB-UniRule"/>
</dbReference>
<dbReference type="GO" id="GO:0006364">
    <property type="term" value="P:rRNA processing"/>
    <property type="evidence" value="ECO:0007669"/>
    <property type="project" value="UniProtKB-KW"/>
</dbReference>
<dbReference type="FunFam" id="3.40.50.300:FF:003001">
    <property type="entry name" value="Adenylate kinase isoenzyme 6"/>
    <property type="match status" value="1"/>
</dbReference>
<dbReference type="Gene3D" id="3.40.50.300">
    <property type="entry name" value="P-loop containing nucleotide triphosphate hydrolases"/>
    <property type="match status" value="1"/>
</dbReference>
<dbReference type="HAMAP" id="MF_00039">
    <property type="entry name" value="Adenylate_kinase_AK6"/>
    <property type="match status" value="1"/>
</dbReference>
<dbReference type="InterPro" id="IPR020618">
    <property type="entry name" value="Adenyl_kinase_AK6"/>
</dbReference>
<dbReference type="InterPro" id="IPR027417">
    <property type="entry name" value="P-loop_NTPase"/>
</dbReference>
<dbReference type="PANTHER" id="PTHR12595:SF0">
    <property type="entry name" value="ADENYLATE KINASE ISOENZYME 6"/>
    <property type="match status" value="1"/>
</dbReference>
<dbReference type="PANTHER" id="PTHR12595">
    <property type="entry name" value="POS9-ACTIVATING FACTOR FAP7-RELATED"/>
    <property type="match status" value="1"/>
</dbReference>
<dbReference type="Pfam" id="PF13238">
    <property type="entry name" value="AAA_18"/>
    <property type="match status" value="1"/>
</dbReference>
<dbReference type="PRINTS" id="PR01100">
    <property type="entry name" value="SHIKIMTKNASE"/>
</dbReference>
<dbReference type="SUPFAM" id="SSF52540">
    <property type="entry name" value="P-loop containing nucleoside triphosphate hydrolases"/>
    <property type="match status" value="1"/>
</dbReference>
<comment type="function">
    <text evidence="1">Broad-specificity nucleoside monophosphate (NMP) kinase that catalyzes the reversible transfer of the terminal phosphate group between nucleoside triphosphates and monophosphates. Also has ATPase activity. Involved in the late cytoplasmic maturation steps of the 40S ribosomal particles, specifically 18S rRNA maturation. While NMP activity is not required for ribosome maturation, ATPase activity is. Associates transiently with small ribosomal subunit protein uS11. ATP hydrolysis breaks the interaction with uS11. May temporarily remove uS11 from the ribosome to enable a conformational change of the ribosomal RNA that is needed for the final maturation step of the small ribosomal subunit. Its NMP activity may have a role in nuclear energy homeostasis. May be involved in regulation of Cajal body (CB) formation.</text>
</comment>
<comment type="catalytic activity">
    <reaction evidence="1">
        <text>AMP + ATP = 2 ADP</text>
        <dbReference type="Rhea" id="RHEA:12973"/>
        <dbReference type="ChEBI" id="CHEBI:30616"/>
        <dbReference type="ChEBI" id="CHEBI:456215"/>
        <dbReference type="ChEBI" id="CHEBI:456216"/>
        <dbReference type="EC" id="2.7.4.3"/>
    </reaction>
</comment>
<comment type="catalytic activity">
    <reaction evidence="1">
        <text>ATP + H2O = ADP + phosphate + H(+)</text>
        <dbReference type="Rhea" id="RHEA:13065"/>
        <dbReference type="ChEBI" id="CHEBI:15377"/>
        <dbReference type="ChEBI" id="CHEBI:15378"/>
        <dbReference type="ChEBI" id="CHEBI:30616"/>
        <dbReference type="ChEBI" id="CHEBI:43474"/>
        <dbReference type="ChEBI" id="CHEBI:456216"/>
    </reaction>
</comment>
<comment type="subunit">
    <text evidence="1">Monomer and homodimer. Interacts with small ribosomal subunit protein uS11. Not a structural component of 43S pre-ribosomes, but transiently interacts with them by binding to uS11. Interacts with COIL (via C-terminus).</text>
</comment>
<comment type="subcellular location">
    <subcellularLocation>
        <location evidence="1">Cytoplasm</location>
    </subcellularLocation>
    <subcellularLocation>
        <location evidence="1">Nucleus</location>
        <location evidence="1">Nucleoplasm</location>
    </subcellularLocation>
    <subcellularLocation>
        <location evidence="1">Nucleus</location>
        <location evidence="1">Cajal body</location>
    </subcellularLocation>
    <text evidence="1">Displays widespread diffuse nucleoplasmic distribution but not detected in nucleoli. Detected in Cajal bodies but not in all cells.</text>
</comment>
<comment type="similarity">
    <text evidence="1">Belongs to the adenylate kinase family. AK6 subfamily.</text>
</comment>
<comment type="caution">
    <text evidence="2">AK6 and TAF9 were initially considered as products of the same gene since they share two exons. However, they are translated from different initiation codons and reading frames and encode unrelated proteins. This arrangement is conserved in some mammalian species.</text>
</comment>
<reference key="1">
    <citation type="submission" date="2007-06" db="EMBL/GenBank/DDBJ databases">
        <authorList>
            <consortium name="NIH - Mammalian Gene Collection (MGC) project"/>
        </authorList>
    </citation>
    <scope>NUCLEOTIDE SEQUENCE [LARGE SCALE MRNA]</scope>
    <source>
        <strain>Hereford</strain>
        <tissue>Fetal pons</tissue>
    </source>
</reference>
<feature type="chain" id="PRO_0000314780" description="Adenylate kinase isoenzyme 6">
    <location>
        <begin position="1"/>
        <end position="172"/>
    </location>
</feature>
<feature type="region of interest" description="NMPbind" evidence="1">
    <location>
        <begin position="33"/>
        <end position="56"/>
    </location>
</feature>
<feature type="region of interest" description="LID" evidence="1">
    <location>
        <begin position="108"/>
        <end position="118"/>
    </location>
</feature>
<feature type="binding site" evidence="1">
    <location>
        <position position="13"/>
    </location>
    <ligand>
        <name>ATP</name>
        <dbReference type="ChEBI" id="CHEBI:30616"/>
    </ligand>
</feature>
<feature type="binding site" evidence="1">
    <location>
        <position position="15"/>
    </location>
    <ligand>
        <name>ATP</name>
        <dbReference type="ChEBI" id="CHEBI:30616"/>
    </ligand>
</feature>
<feature type="binding site" evidence="1">
    <location>
        <position position="16"/>
    </location>
    <ligand>
        <name>ATP</name>
        <dbReference type="ChEBI" id="CHEBI:30616"/>
    </ligand>
</feature>
<feature type="binding site" evidence="1">
    <location>
        <position position="17"/>
    </location>
    <ligand>
        <name>ATP</name>
        <dbReference type="ChEBI" id="CHEBI:30616"/>
    </ligand>
</feature>
<feature type="binding site" evidence="1">
    <location>
        <position position="18"/>
    </location>
    <ligand>
        <name>ATP</name>
        <dbReference type="ChEBI" id="CHEBI:30616"/>
    </ligand>
</feature>
<feature type="binding site" evidence="1">
    <location>
        <position position="109"/>
    </location>
    <ligand>
        <name>ATP</name>
        <dbReference type="ChEBI" id="CHEBI:30616"/>
    </ligand>
</feature>
<feature type="binding site" evidence="1">
    <location>
        <position position="148"/>
    </location>
    <ligand>
        <name>ATP</name>
        <dbReference type="ChEBI" id="CHEBI:30616"/>
    </ligand>
</feature>
<accession>A5PJA1</accession>
<proteinExistence type="evidence at transcript level"/>